<reference key="1">
    <citation type="journal article" date="2011" name="J. Bacteriol.">
        <title>Comparative genomics of 28 Salmonella enterica isolates: evidence for CRISPR-mediated adaptive sublineage evolution.</title>
        <authorList>
            <person name="Fricke W.F."/>
            <person name="Mammel M.K."/>
            <person name="McDermott P.F."/>
            <person name="Tartera C."/>
            <person name="White D.G."/>
            <person name="Leclerc J.E."/>
            <person name="Ravel J."/>
            <person name="Cebula T.A."/>
        </authorList>
    </citation>
    <scope>NUCLEOTIDE SEQUENCE [LARGE SCALE GENOMIC DNA]</scope>
    <source>
        <strain>SL254</strain>
    </source>
</reference>
<organism>
    <name type="scientific">Salmonella newport (strain SL254)</name>
    <dbReference type="NCBI Taxonomy" id="423368"/>
    <lineage>
        <taxon>Bacteria</taxon>
        <taxon>Pseudomonadati</taxon>
        <taxon>Pseudomonadota</taxon>
        <taxon>Gammaproteobacteria</taxon>
        <taxon>Enterobacterales</taxon>
        <taxon>Enterobacteriaceae</taxon>
        <taxon>Salmonella</taxon>
    </lineage>
</organism>
<comment type="function">
    <text evidence="1">Part of a membrane-bound complex that couples electron transfer with translocation of ions across the membrane. Required to maintain the reduced state of SoxR.</text>
</comment>
<comment type="cofactor">
    <cofactor evidence="1">
        <name>FMN</name>
        <dbReference type="ChEBI" id="CHEBI:58210"/>
    </cofactor>
</comment>
<comment type="subunit">
    <text evidence="1">The complex is composed of six subunits: RsxA, RsxB, RsxC, RsxD, RsxE and RsxG.</text>
</comment>
<comment type="subcellular location">
    <subcellularLocation>
        <location evidence="1">Cell inner membrane</location>
        <topology evidence="1">Multi-pass membrane protein</topology>
    </subcellularLocation>
</comment>
<comment type="similarity">
    <text evidence="1">Belongs to the NqrB/RnfD family.</text>
</comment>
<evidence type="ECO:0000255" key="1">
    <source>
        <dbReference type="HAMAP-Rule" id="MF_00462"/>
    </source>
</evidence>
<feature type="chain" id="PRO_1000125396" description="Ion-translocating oxidoreductase complex subunit D">
    <location>
        <begin position="1"/>
        <end position="352"/>
    </location>
</feature>
<feature type="transmembrane region" description="Helical" evidence="1">
    <location>
        <begin position="20"/>
        <end position="40"/>
    </location>
</feature>
<feature type="transmembrane region" description="Helical" evidence="1">
    <location>
        <begin position="42"/>
        <end position="62"/>
    </location>
</feature>
<feature type="transmembrane region" description="Helical" evidence="1">
    <location>
        <begin position="69"/>
        <end position="91"/>
    </location>
</feature>
<feature type="transmembrane region" description="Helical" evidence="1">
    <location>
        <begin position="123"/>
        <end position="143"/>
    </location>
</feature>
<feature type="transmembrane region" description="Helical" evidence="1">
    <location>
        <begin position="215"/>
        <end position="235"/>
    </location>
</feature>
<feature type="transmembrane region" description="Helical" evidence="1">
    <location>
        <begin position="242"/>
        <end position="262"/>
    </location>
</feature>
<feature type="transmembrane region" description="Helical" evidence="1">
    <location>
        <begin position="267"/>
        <end position="287"/>
    </location>
</feature>
<feature type="transmembrane region" description="Helical" evidence="1">
    <location>
        <begin position="301"/>
        <end position="321"/>
    </location>
</feature>
<feature type="transmembrane region" description="Helical" evidence="1">
    <location>
        <begin position="322"/>
        <end position="342"/>
    </location>
</feature>
<feature type="modified residue" description="FMN phosphoryl threonine" evidence="1">
    <location>
        <position position="187"/>
    </location>
</feature>
<keyword id="KW-0997">Cell inner membrane</keyword>
<keyword id="KW-1003">Cell membrane</keyword>
<keyword id="KW-0249">Electron transport</keyword>
<keyword id="KW-0285">Flavoprotein</keyword>
<keyword id="KW-0288">FMN</keyword>
<keyword id="KW-0472">Membrane</keyword>
<keyword id="KW-0597">Phosphoprotein</keyword>
<keyword id="KW-1278">Translocase</keyword>
<keyword id="KW-0812">Transmembrane</keyword>
<keyword id="KW-1133">Transmembrane helix</keyword>
<keyword id="KW-0813">Transport</keyword>
<accession>B4T593</accession>
<name>RSXD_SALNS</name>
<proteinExistence type="inferred from homology"/>
<gene>
    <name evidence="1" type="primary">rsxD</name>
    <name type="ordered locus">SNSL254_A1566</name>
</gene>
<sequence length="352" mass="38252">MVFRIASSPYTHNQRQTSRIMLLVVIAALPGIAAQTWFFGWGTLFQIVLAAITALVAEAIVLRLRKQSVASHLQDYSALLTGLLLAVSIPPLAPWWMVVLGTGFAIIIAKQLYGGLGQNPFNPAMIGYVVLLISFPVQMTSWLPPYEIAATTPDMLDTLRMIFTGHTASGGDMTLLRIGIDGISQATPLDTFKTSLRAGHSVEQIMQYPIYSGALAGVGWQWVNLAWLVGGVFLLWQKAIRWHIPVSFLLTLALCAALGWLFSPATLASPQLHLLSGATMLGAFFILTDPVTASTTNRGRLIFGALAGVLVWLIRSFGGYPDGVAFAVLLANITVPLIDYYTRPRVYGHRKG</sequence>
<dbReference type="EC" id="7.-.-.-" evidence="1"/>
<dbReference type="EMBL" id="CP001113">
    <property type="protein sequence ID" value="ACF62968.1"/>
    <property type="molecule type" value="Genomic_DNA"/>
</dbReference>
<dbReference type="RefSeq" id="WP_000231963.1">
    <property type="nucleotide sequence ID" value="NZ_CCMR01000003.1"/>
</dbReference>
<dbReference type="SMR" id="B4T593"/>
<dbReference type="KEGG" id="see:SNSL254_A1566"/>
<dbReference type="HOGENOM" id="CLU_042020_0_0_6"/>
<dbReference type="Proteomes" id="UP000008824">
    <property type="component" value="Chromosome"/>
</dbReference>
<dbReference type="GO" id="GO:0005886">
    <property type="term" value="C:plasma membrane"/>
    <property type="evidence" value="ECO:0007669"/>
    <property type="project" value="UniProtKB-SubCell"/>
</dbReference>
<dbReference type="GO" id="GO:0022900">
    <property type="term" value="P:electron transport chain"/>
    <property type="evidence" value="ECO:0007669"/>
    <property type="project" value="UniProtKB-UniRule"/>
</dbReference>
<dbReference type="GO" id="GO:0055085">
    <property type="term" value="P:transmembrane transport"/>
    <property type="evidence" value="ECO:0007669"/>
    <property type="project" value="InterPro"/>
</dbReference>
<dbReference type="HAMAP" id="MF_00462">
    <property type="entry name" value="RsxD_RnfD"/>
    <property type="match status" value="1"/>
</dbReference>
<dbReference type="InterPro" id="IPR004338">
    <property type="entry name" value="NqrB/RnfD"/>
</dbReference>
<dbReference type="InterPro" id="IPR011303">
    <property type="entry name" value="RnfD_bac"/>
</dbReference>
<dbReference type="NCBIfam" id="NF002011">
    <property type="entry name" value="PRK00816.1"/>
    <property type="match status" value="1"/>
</dbReference>
<dbReference type="NCBIfam" id="TIGR01946">
    <property type="entry name" value="rnfD"/>
    <property type="match status" value="1"/>
</dbReference>
<dbReference type="PANTHER" id="PTHR30578">
    <property type="entry name" value="ELECTRON TRANSPORT COMPLEX PROTEIN RNFD"/>
    <property type="match status" value="1"/>
</dbReference>
<dbReference type="PANTHER" id="PTHR30578:SF0">
    <property type="entry name" value="ION-TRANSLOCATING OXIDOREDUCTASE COMPLEX SUBUNIT D"/>
    <property type="match status" value="1"/>
</dbReference>
<dbReference type="Pfam" id="PF03116">
    <property type="entry name" value="NQR2_RnfD_RnfE"/>
    <property type="match status" value="1"/>
</dbReference>
<protein>
    <recommendedName>
        <fullName evidence="1">Ion-translocating oxidoreductase complex subunit D</fullName>
        <ecNumber evidence="1">7.-.-.-</ecNumber>
    </recommendedName>
    <alternativeName>
        <fullName evidence="1">Rsx electron transport complex subunit D</fullName>
    </alternativeName>
</protein>